<sequence length="269" mass="29942">MSEGKKRSRGGLAIISPPKRRSQRKSTSDSPIPEPIMKRSITVKKIMPRKTLAAIVNTGSQSTPKVSNVPPAPRRSSRISPKIQKENAFSEQSQIVHKDVPGQSSAPKINVLSPIPVNIQLSPKQDNRDIIMSQKVRRSYSRLEMSLNSSSSLYSPTRKTDSSDTSTPNVVLKSGRSSLFGFDKLLNSEMPDGELKKSNGVTRKKNTKERILGTVLPEQPDHNIPGVVLAKQKRRKRKVAIIEKSDLDEWAAFMNAEFEEAEKFDLTVE</sequence>
<evidence type="ECO:0000250" key="1">
    <source>
        <dbReference type="UniProtKB" id="O14291"/>
    </source>
</evidence>
<evidence type="ECO:0000256" key="2">
    <source>
        <dbReference type="SAM" id="MobiDB-lite"/>
    </source>
</evidence>
<evidence type="ECO:0000269" key="3">
    <source>
    </source>
</evidence>
<evidence type="ECO:0000269" key="4">
    <source>
    </source>
</evidence>
<evidence type="ECO:0000305" key="5"/>
<evidence type="ECO:0000305" key="6">
    <source>
    </source>
</evidence>
<evidence type="ECO:0000305" key="7">
    <source>
    </source>
</evidence>
<name>CCA5A_XENLA</name>
<reference key="1">
    <citation type="journal article" date="2005" name="Mol. Cell">
        <title>Sororin, a substrate of the anaphase-promoting complex, is required for sister chromatid cohesion in vertebrates.</title>
        <authorList>
            <person name="Rankin S."/>
            <person name="Ayad N.G."/>
            <person name="Kirschner M.W."/>
        </authorList>
    </citation>
    <scope>NUCLEOTIDE SEQUENCE [MRNA]</scope>
    <scope>FUNCTION</scope>
    <scope>UBIQUITINATION</scope>
    <scope>INTERACTION WITH THE APC/C COMPLEX</scope>
    <scope>MUTAGENESIS OF 85-LYS--ASN-87</scope>
</reference>
<reference key="2">
    <citation type="journal article" date="2005" name="Mol. Cell">
        <authorList>
            <person name="Rankin S."/>
            <person name="Ayad N.G."/>
            <person name="Kirschner M.W."/>
        </authorList>
    </citation>
    <scope>ERRATUM OF PUBMED:15837422</scope>
</reference>
<reference key="3">
    <citation type="journal article" date="2010" name="Cell">
        <title>Sororin mediates sister chromatid cohesion by antagonizing wapl.</title>
        <authorList>
            <person name="Nishiyama T."/>
            <person name="Ladurner R."/>
            <person name="Schmitz J."/>
            <person name="Kreidl E."/>
            <person name="Schleiffer A."/>
            <person name="Bhaskara V."/>
            <person name="Bando M."/>
            <person name="Shirahige K."/>
            <person name="Hyman A.A."/>
            <person name="Mechtler K."/>
            <person name="Peters J.M."/>
        </authorList>
    </citation>
    <scope>FUNCTION</scope>
    <scope>INTERACTION WITH PDS5A AND PDS5B</scope>
</reference>
<reference key="4">
    <citation type="journal article" date="2010" name="Proc. Natl. Acad. Sci. U.S.A.">
        <title>Sororin cooperates with the acetyltransferase Eco2 to ensure DNA replication-dependent sister chromatid cohesion.</title>
        <authorList>
            <person name="Lafont A.L."/>
            <person name="Song J."/>
            <person name="Rankin S."/>
        </authorList>
    </citation>
    <scope>SUBCELLULAR LOCATION</scope>
</reference>
<organism>
    <name type="scientific">Xenopus laevis</name>
    <name type="common">African clawed frog</name>
    <dbReference type="NCBI Taxonomy" id="8355"/>
    <lineage>
        <taxon>Eukaryota</taxon>
        <taxon>Metazoa</taxon>
        <taxon>Chordata</taxon>
        <taxon>Craniata</taxon>
        <taxon>Vertebrata</taxon>
        <taxon>Euteleostomi</taxon>
        <taxon>Amphibia</taxon>
        <taxon>Batrachia</taxon>
        <taxon>Anura</taxon>
        <taxon>Pipoidea</taxon>
        <taxon>Pipidae</taxon>
        <taxon>Xenopodinae</taxon>
        <taxon>Xenopus</taxon>
        <taxon>Xenopus</taxon>
    </lineage>
</organism>
<keyword id="KW-0131">Cell cycle</keyword>
<keyword id="KW-0132">Cell division</keyword>
<keyword id="KW-0158">Chromosome</keyword>
<keyword id="KW-0963">Cytoplasm</keyword>
<keyword id="KW-0498">Mitosis</keyword>
<keyword id="KW-0539">Nucleus</keyword>
<keyword id="KW-1185">Reference proteome</keyword>
<keyword id="KW-0832">Ubl conjugation</keyword>
<comment type="function">
    <text evidence="6 7">Regulator of sister chromatid cohesion in mitosis stabilizing cohesin complex association with chromatin. May antagonize the action of wapl which stimulates cohesin dissociation from chromatin. Cohesion ensures that chromosome partitioning is accurate in both meiotic and mitotic cells and plays an important role in DNA repair. Required for efficient DNA double-stranded break repair (Probable).</text>
</comment>
<comment type="subunit">
    <text evidence="6 7">Interacts with the APC/C complex. Interacts with the chromatin-bound cohesin complex; the interaction is indirect, occurs after DNA replication and requires acetylation of the cohesin component smc3. Interacts (via the FGF motif) with pds5a and pds5b; the interaction is direct and prevents the interaction of pds5a with wapl (Probable).</text>
</comment>
<comment type="subcellular location">
    <subcellularLocation>
        <location evidence="4">Nucleus</location>
    </subcellularLocation>
    <subcellularLocation>
        <location evidence="4">Chromosome</location>
    </subcellularLocation>
    <subcellularLocation>
        <location evidence="4">Cytoplasm</location>
    </subcellularLocation>
    <text>Associates with nuclear chromatin from S phase until metaphase and is released in the cytoplasm upon nuclear envelope breakdown.</text>
</comment>
<comment type="domain">
    <text>The KEN box is required for the association with the APC/C complex.</text>
</comment>
<comment type="PTM">
    <text evidence="3">Ubiquitinated by the APC/C complex in G1, leading to its degradation.</text>
</comment>
<comment type="similarity">
    <text evidence="5">Belongs to the sororin family.</text>
</comment>
<accession>Q563C3</accession>
<gene>
    <name type="primary">cdca5-a</name>
</gene>
<dbReference type="EMBL" id="AY962466">
    <property type="protein sequence ID" value="AAX73201.1"/>
    <property type="molecule type" value="mRNA"/>
</dbReference>
<dbReference type="RefSeq" id="NP_001089079.1">
    <property type="nucleotide sequence ID" value="NM_001095610.2"/>
</dbReference>
<dbReference type="GeneID" id="733230"/>
<dbReference type="KEGG" id="xla:733230"/>
<dbReference type="AGR" id="Xenbase:XB-GENE-5908158"/>
<dbReference type="CTD" id="733230"/>
<dbReference type="Xenbase" id="XB-GENE-5908158">
    <property type="gene designation" value="cdca5.S"/>
</dbReference>
<dbReference type="OrthoDB" id="9949198at2759"/>
<dbReference type="Proteomes" id="UP000186698">
    <property type="component" value="Chromosome 4S"/>
</dbReference>
<dbReference type="Bgee" id="733230">
    <property type="expression patterns" value="Expressed in gastrula and 15 other cell types or tissues"/>
</dbReference>
<dbReference type="GO" id="GO:0000785">
    <property type="term" value="C:chromatin"/>
    <property type="evidence" value="ECO:0000250"/>
    <property type="project" value="UniProtKB"/>
</dbReference>
<dbReference type="GO" id="GO:0005737">
    <property type="term" value="C:cytoplasm"/>
    <property type="evidence" value="ECO:0000250"/>
    <property type="project" value="UniProtKB"/>
</dbReference>
<dbReference type="GO" id="GO:0005634">
    <property type="term" value="C:nucleus"/>
    <property type="evidence" value="ECO:0000250"/>
    <property type="project" value="UniProtKB"/>
</dbReference>
<dbReference type="GO" id="GO:0051301">
    <property type="term" value="P:cell division"/>
    <property type="evidence" value="ECO:0007669"/>
    <property type="project" value="UniProtKB-KW"/>
</dbReference>
<dbReference type="GO" id="GO:0006302">
    <property type="term" value="P:double-strand break repair"/>
    <property type="evidence" value="ECO:0000250"/>
    <property type="project" value="UniProtKB"/>
</dbReference>
<dbReference type="GO" id="GO:0007080">
    <property type="term" value="P:mitotic metaphase chromosome alignment"/>
    <property type="evidence" value="ECO:0000318"/>
    <property type="project" value="GO_Central"/>
</dbReference>
<dbReference type="GO" id="GO:0007064">
    <property type="term" value="P:mitotic sister chromatid cohesion"/>
    <property type="evidence" value="ECO:0000315"/>
    <property type="project" value="UniProtKB"/>
</dbReference>
<dbReference type="GO" id="GO:0031536">
    <property type="term" value="P:positive regulation of exit from mitosis"/>
    <property type="evidence" value="ECO:0000318"/>
    <property type="project" value="GO_Central"/>
</dbReference>
<dbReference type="InterPro" id="IPR018605">
    <property type="entry name" value="Sororin"/>
</dbReference>
<dbReference type="PANTHER" id="PTHR31092">
    <property type="entry name" value="SORORIN"/>
    <property type="match status" value="1"/>
</dbReference>
<dbReference type="PANTHER" id="PTHR31092:SF2">
    <property type="entry name" value="SORORIN"/>
    <property type="match status" value="1"/>
</dbReference>
<dbReference type="Pfam" id="PF25220">
    <property type="entry name" value="Sororin_C"/>
    <property type="match status" value="1"/>
</dbReference>
<dbReference type="Pfam" id="PF09666">
    <property type="entry name" value="Sororin_middle"/>
    <property type="match status" value="1"/>
</dbReference>
<feature type="chain" id="PRO_0000089390" description="Sororin">
    <location>
        <begin position="1"/>
        <end position="269"/>
    </location>
</feature>
<feature type="region of interest" description="Disordered" evidence="2">
    <location>
        <begin position="1"/>
        <end position="39"/>
    </location>
</feature>
<feature type="region of interest" description="Disordered" evidence="2">
    <location>
        <begin position="56"/>
        <end position="110"/>
    </location>
</feature>
<feature type="region of interest" description="Disordered" evidence="2">
    <location>
        <begin position="146"/>
        <end position="169"/>
    </location>
</feature>
<feature type="region of interest" description="C-terminal Sororin domain" evidence="1">
    <location>
        <begin position="247"/>
        <end position="269"/>
    </location>
</feature>
<feature type="short sequence motif" description="KEN box">
    <location>
        <begin position="85"/>
        <end position="87"/>
    </location>
</feature>
<feature type="short sequence motif" description="FGF motif">
    <location>
        <begin position="180"/>
        <end position="182"/>
    </location>
</feature>
<feature type="compositionally biased region" description="Polar residues" evidence="2">
    <location>
        <begin position="57"/>
        <end position="66"/>
    </location>
</feature>
<feature type="compositionally biased region" description="Low complexity" evidence="2">
    <location>
        <begin position="146"/>
        <end position="155"/>
    </location>
</feature>
<feature type="mutagenesis site" description="Prevents ubiquitination and subsequent degradation." evidence="3">
    <original>KEN</original>
    <variation>AAA</variation>
    <location>
        <begin position="85"/>
        <end position="87"/>
    </location>
</feature>
<protein>
    <recommendedName>
        <fullName>Sororin</fullName>
    </recommendedName>
    <alternativeName>
        <fullName>Cell division cycle-associated protein 5-A</fullName>
    </alternativeName>
    <alternativeName>
        <fullName>Xp35</fullName>
    </alternativeName>
</protein>
<proteinExistence type="evidence at protein level"/>